<evidence type="ECO:0000250" key="1">
    <source>
        <dbReference type="UniProtKB" id="Q5ATG8"/>
    </source>
</evidence>
<evidence type="ECO:0000255" key="2"/>
<evidence type="ECO:0000255" key="3">
    <source>
        <dbReference type="PROSITE-ProRule" id="PRU00258"/>
    </source>
</evidence>
<evidence type="ECO:0000255" key="4">
    <source>
        <dbReference type="PROSITE-ProRule" id="PRU01348"/>
    </source>
</evidence>
<evidence type="ECO:0000255" key="5">
    <source>
        <dbReference type="PROSITE-ProRule" id="PRU01363"/>
    </source>
</evidence>
<evidence type="ECO:0000256" key="6">
    <source>
        <dbReference type="SAM" id="MobiDB-lite"/>
    </source>
</evidence>
<evidence type="ECO:0000269" key="7">
    <source>
    </source>
</evidence>
<evidence type="ECO:0000303" key="8">
    <source>
    </source>
</evidence>
<evidence type="ECO:0000305" key="9"/>
<evidence type="ECO:0000305" key="10">
    <source>
    </source>
</evidence>
<dbReference type="EC" id="2.3.1.-" evidence="7"/>
<dbReference type="EC" id="6.3.2.-" evidence="7"/>
<dbReference type="EMBL" id="MK539848">
    <property type="protein sequence ID" value="QBQ83704.1"/>
    <property type="molecule type" value="Genomic_DNA"/>
</dbReference>
<dbReference type="SMR" id="A0A482N9V7"/>
<dbReference type="GO" id="GO:0004315">
    <property type="term" value="F:3-oxoacyl-[acyl-carrier-protein] synthase activity"/>
    <property type="evidence" value="ECO:0007669"/>
    <property type="project" value="InterPro"/>
</dbReference>
<dbReference type="GO" id="GO:0004312">
    <property type="term" value="F:fatty acid synthase activity"/>
    <property type="evidence" value="ECO:0007669"/>
    <property type="project" value="TreeGrafter"/>
</dbReference>
<dbReference type="GO" id="GO:0016874">
    <property type="term" value="F:ligase activity"/>
    <property type="evidence" value="ECO:0007669"/>
    <property type="project" value="UniProtKB-KW"/>
</dbReference>
<dbReference type="GO" id="GO:0008168">
    <property type="term" value="F:methyltransferase activity"/>
    <property type="evidence" value="ECO:0007669"/>
    <property type="project" value="UniProtKB-KW"/>
</dbReference>
<dbReference type="GO" id="GO:1904091">
    <property type="term" value="F:non-ribosomal peptide synthetase activity"/>
    <property type="evidence" value="ECO:0000314"/>
    <property type="project" value="UniProt"/>
</dbReference>
<dbReference type="GO" id="GO:0016491">
    <property type="term" value="F:oxidoreductase activity"/>
    <property type="evidence" value="ECO:0000314"/>
    <property type="project" value="UniProt"/>
</dbReference>
<dbReference type="GO" id="GO:0031177">
    <property type="term" value="F:phosphopantetheine binding"/>
    <property type="evidence" value="ECO:0007669"/>
    <property type="project" value="InterPro"/>
</dbReference>
<dbReference type="GO" id="GO:0016218">
    <property type="term" value="F:polyketide synthase activity"/>
    <property type="evidence" value="ECO:0000314"/>
    <property type="project" value="UniProt"/>
</dbReference>
<dbReference type="GO" id="GO:0006633">
    <property type="term" value="P:fatty acid biosynthetic process"/>
    <property type="evidence" value="ECO:0007669"/>
    <property type="project" value="InterPro"/>
</dbReference>
<dbReference type="GO" id="GO:0140781">
    <property type="term" value="P:ilicicolin H biosynthetic process"/>
    <property type="evidence" value="ECO:0000314"/>
    <property type="project" value="GO_Central"/>
</dbReference>
<dbReference type="GO" id="GO:0032259">
    <property type="term" value="P:methylation"/>
    <property type="evidence" value="ECO:0007669"/>
    <property type="project" value="UniProtKB-KW"/>
</dbReference>
<dbReference type="CDD" id="cd05930">
    <property type="entry name" value="A_NRPS"/>
    <property type="match status" value="1"/>
</dbReference>
<dbReference type="CDD" id="cd02440">
    <property type="entry name" value="AdoMet_MTases"/>
    <property type="match status" value="1"/>
</dbReference>
<dbReference type="CDD" id="cd19532">
    <property type="entry name" value="C_PKS-NRPS"/>
    <property type="match status" value="1"/>
</dbReference>
<dbReference type="CDD" id="cd00833">
    <property type="entry name" value="PKS"/>
    <property type="match status" value="1"/>
</dbReference>
<dbReference type="FunFam" id="3.40.47.10:FF:000019">
    <property type="entry name" value="Polyketide synthase type I"/>
    <property type="match status" value="1"/>
</dbReference>
<dbReference type="Gene3D" id="3.30.300.30">
    <property type="match status" value="1"/>
</dbReference>
<dbReference type="Gene3D" id="3.40.47.10">
    <property type="match status" value="1"/>
</dbReference>
<dbReference type="Gene3D" id="1.10.1200.10">
    <property type="entry name" value="ACP-like"/>
    <property type="match status" value="2"/>
</dbReference>
<dbReference type="Gene3D" id="3.30.559.10">
    <property type="entry name" value="Chloramphenicol acetyltransferase-like domain"/>
    <property type="match status" value="1"/>
</dbReference>
<dbReference type="Gene3D" id="3.40.366.10">
    <property type="entry name" value="Malonyl-Coenzyme A Acyl Carrier Protein, domain 2"/>
    <property type="match status" value="1"/>
</dbReference>
<dbReference type="Gene3D" id="3.40.50.12780">
    <property type="entry name" value="N-terminal domain of ligase-like"/>
    <property type="match status" value="1"/>
</dbReference>
<dbReference type="Gene3D" id="3.40.50.720">
    <property type="entry name" value="NAD(P)-binding Rossmann-like Domain"/>
    <property type="match status" value="2"/>
</dbReference>
<dbReference type="Gene3D" id="3.30.559.30">
    <property type="entry name" value="Nonribosomal peptide synthetase, condensation domain"/>
    <property type="match status" value="1"/>
</dbReference>
<dbReference type="Gene3D" id="3.10.129.110">
    <property type="entry name" value="Polyketide synthase dehydratase"/>
    <property type="match status" value="1"/>
</dbReference>
<dbReference type="Gene3D" id="3.40.50.150">
    <property type="entry name" value="Vaccinia Virus protein VP39"/>
    <property type="match status" value="1"/>
</dbReference>
<dbReference type="InterPro" id="IPR010071">
    <property type="entry name" value="AA_adenyl_dom"/>
</dbReference>
<dbReference type="InterPro" id="IPR001227">
    <property type="entry name" value="Ac_transferase_dom_sf"/>
</dbReference>
<dbReference type="InterPro" id="IPR036736">
    <property type="entry name" value="ACP-like_sf"/>
</dbReference>
<dbReference type="InterPro" id="IPR014043">
    <property type="entry name" value="Acyl_transferase_dom"/>
</dbReference>
<dbReference type="InterPro" id="IPR016035">
    <property type="entry name" value="Acyl_Trfase/lysoPLipase"/>
</dbReference>
<dbReference type="InterPro" id="IPR045851">
    <property type="entry name" value="AMP-bd_C_sf"/>
</dbReference>
<dbReference type="InterPro" id="IPR020845">
    <property type="entry name" value="AMP-binding_CS"/>
</dbReference>
<dbReference type="InterPro" id="IPR000873">
    <property type="entry name" value="AMP-dep_synth/lig_dom"/>
</dbReference>
<dbReference type="InterPro" id="IPR042099">
    <property type="entry name" value="ANL_N_sf"/>
</dbReference>
<dbReference type="InterPro" id="IPR023213">
    <property type="entry name" value="CAT-like_dom_sf"/>
</dbReference>
<dbReference type="InterPro" id="IPR001242">
    <property type="entry name" value="Condensatn"/>
</dbReference>
<dbReference type="InterPro" id="IPR013120">
    <property type="entry name" value="Far_NAD-bd"/>
</dbReference>
<dbReference type="InterPro" id="IPR018201">
    <property type="entry name" value="Ketoacyl_synth_AS"/>
</dbReference>
<dbReference type="InterPro" id="IPR014031">
    <property type="entry name" value="Ketoacyl_synth_C"/>
</dbReference>
<dbReference type="InterPro" id="IPR014030">
    <property type="entry name" value="Ketoacyl_synth_N"/>
</dbReference>
<dbReference type="InterPro" id="IPR016036">
    <property type="entry name" value="Malonyl_transacylase_ACP-bd"/>
</dbReference>
<dbReference type="InterPro" id="IPR013217">
    <property type="entry name" value="Methyltransf_12"/>
</dbReference>
<dbReference type="InterPro" id="IPR036291">
    <property type="entry name" value="NAD(P)-bd_dom_sf"/>
</dbReference>
<dbReference type="InterPro" id="IPR032821">
    <property type="entry name" value="PKS_assoc"/>
</dbReference>
<dbReference type="InterPro" id="IPR020841">
    <property type="entry name" value="PKS_Beta-ketoAc_synthase_dom"/>
</dbReference>
<dbReference type="InterPro" id="IPR042104">
    <property type="entry name" value="PKS_dehydratase_sf"/>
</dbReference>
<dbReference type="InterPro" id="IPR020807">
    <property type="entry name" value="PKS_DH"/>
</dbReference>
<dbReference type="InterPro" id="IPR049551">
    <property type="entry name" value="PKS_DH_C"/>
</dbReference>
<dbReference type="InterPro" id="IPR049552">
    <property type="entry name" value="PKS_DH_N"/>
</dbReference>
<dbReference type="InterPro" id="IPR013968">
    <property type="entry name" value="PKS_KR"/>
</dbReference>
<dbReference type="InterPro" id="IPR049900">
    <property type="entry name" value="PKS_mFAS_DH"/>
</dbReference>
<dbReference type="InterPro" id="IPR050091">
    <property type="entry name" value="PKS_NRPS_Biosynth_Enz"/>
</dbReference>
<dbReference type="InterPro" id="IPR020806">
    <property type="entry name" value="PKS_PP-bd"/>
</dbReference>
<dbReference type="InterPro" id="IPR009081">
    <property type="entry name" value="PP-bd_ACP"/>
</dbReference>
<dbReference type="InterPro" id="IPR006162">
    <property type="entry name" value="Ppantetheine_attach_site"/>
</dbReference>
<dbReference type="InterPro" id="IPR029063">
    <property type="entry name" value="SAM-dependent_MTases_sf"/>
</dbReference>
<dbReference type="InterPro" id="IPR016039">
    <property type="entry name" value="Thiolase-like"/>
</dbReference>
<dbReference type="NCBIfam" id="TIGR01733">
    <property type="entry name" value="AA-adenyl-dom"/>
    <property type="match status" value="1"/>
</dbReference>
<dbReference type="PANTHER" id="PTHR43775">
    <property type="entry name" value="FATTY ACID SYNTHASE"/>
    <property type="match status" value="1"/>
</dbReference>
<dbReference type="PANTHER" id="PTHR43775:SF20">
    <property type="entry name" value="HYBRID PKS-NRPS SYNTHETASE APDA"/>
    <property type="match status" value="1"/>
</dbReference>
<dbReference type="Pfam" id="PF00698">
    <property type="entry name" value="Acyl_transf_1"/>
    <property type="match status" value="1"/>
</dbReference>
<dbReference type="Pfam" id="PF00501">
    <property type="entry name" value="AMP-binding"/>
    <property type="match status" value="1"/>
</dbReference>
<dbReference type="Pfam" id="PF00668">
    <property type="entry name" value="Condensation"/>
    <property type="match status" value="1"/>
</dbReference>
<dbReference type="Pfam" id="PF16197">
    <property type="entry name" value="KAsynt_C_assoc"/>
    <property type="match status" value="1"/>
</dbReference>
<dbReference type="Pfam" id="PF00109">
    <property type="entry name" value="ketoacyl-synt"/>
    <property type="match status" value="1"/>
</dbReference>
<dbReference type="Pfam" id="PF02801">
    <property type="entry name" value="Ketoacyl-synt_C"/>
    <property type="match status" value="1"/>
</dbReference>
<dbReference type="Pfam" id="PF08659">
    <property type="entry name" value="KR"/>
    <property type="match status" value="1"/>
</dbReference>
<dbReference type="Pfam" id="PF08242">
    <property type="entry name" value="Methyltransf_12"/>
    <property type="match status" value="1"/>
</dbReference>
<dbReference type="Pfam" id="PF07993">
    <property type="entry name" value="NAD_binding_4"/>
    <property type="match status" value="1"/>
</dbReference>
<dbReference type="Pfam" id="PF21089">
    <property type="entry name" value="PKS_DH_N"/>
    <property type="match status" value="1"/>
</dbReference>
<dbReference type="Pfam" id="PF00550">
    <property type="entry name" value="PP-binding"/>
    <property type="match status" value="2"/>
</dbReference>
<dbReference type="Pfam" id="PF14765">
    <property type="entry name" value="PS-DH"/>
    <property type="match status" value="1"/>
</dbReference>
<dbReference type="SMART" id="SM00827">
    <property type="entry name" value="PKS_AT"/>
    <property type="match status" value="1"/>
</dbReference>
<dbReference type="SMART" id="SM00826">
    <property type="entry name" value="PKS_DH"/>
    <property type="match status" value="1"/>
</dbReference>
<dbReference type="SMART" id="SM00822">
    <property type="entry name" value="PKS_KR"/>
    <property type="match status" value="1"/>
</dbReference>
<dbReference type="SMART" id="SM00825">
    <property type="entry name" value="PKS_KS"/>
    <property type="match status" value="1"/>
</dbReference>
<dbReference type="SMART" id="SM00823">
    <property type="entry name" value="PKS_PP"/>
    <property type="match status" value="2"/>
</dbReference>
<dbReference type="SUPFAM" id="SSF56801">
    <property type="entry name" value="Acetyl-CoA synthetase-like"/>
    <property type="match status" value="1"/>
</dbReference>
<dbReference type="SUPFAM" id="SSF47336">
    <property type="entry name" value="ACP-like"/>
    <property type="match status" value="2"/>
</dbReference>
<dbReference type="SUPFAM" id="SSF52777">
    <property type="entry name" value="CoA-dependent acyltransferases"/>
    <property type="match status" value="2"/>
</dbReference>
<dbReference type="SUPFAM" id="SSF52151">
    <property type="entry name" value="FabD/lysophospholipase-like"/>
    <property type="match status" value="1"/>
</dbReference>
<dbReference type="SUPFAM" id="SSF51735">
    <property type="entry name" value="NAD(P)-binding Rossmann-fold domains"/>
    <property type="match status" value="2"/>
</dbReference>
<dbReference type="SUPFAM" id="SSF55048">
    <property type="entry name" value="Probable ACP-binding domain of malonyl-CoA ACP transacylase"/>
    <property type="match status" value="1"/>
</dbReference>
<dbReference type="SUPFAM" id="SSF53335">
    <property type="entry name" value="S-adenosyl-L-methionine-dependent methyltransferases"/>
    <property type="match status" value="1"/>
</dbReference>
<dbReference type="SUPFAM" id="SSF53901">
    <property type="entry name" value="Thiolase-like"/>
    <property type="match status" value="1"/>
</dbReference>
<dbReference type="PROSITE" id="PS00455">
    <property type="entry name" value="AMP_BINDING"/>
    <property type="match status" value="1"/>
</dbReference>
<dbReference type="PROSITE" id="PS50075">
    <property type="entry name" value="CARRIER"/>
    <property type="match status" value="2"/>
</dbReference>
<dbReference type="PROSITE" id="PS00606">
    <property type="entry name" value="KS3_1"/>
    <property type="match status" value="1"/>
</dbReference>
<dbReference type="PROSITE" id="PS52004">
    <property type="entry name" value="KS3_2"/>
    <property type="match status" value="1"/>
</dbReference>
<dbReference type="PROSITE" id="PS00012">
    <property type="entry name" value="PHOSPHOPANTETHEINE"/>
    <property type="match status" value="1"/>
</dbReference>
<dbReference type="PROSITE" id="PS52019">
    <property type="entry name" value="PKS_MFAS_DH"/>
    <property type="match status" value="1"/>
</dbReference>
<proteinExistence type="evidence at protein level"/>
<accession>A0A482N9V7</accession>
<sequence>MAANDSNNQTKPQLPEEPVAIVGSSCRFPGSSNSPSKLWDLLRQPRDVLKEFDPDRLNLKRFYHPDGDTHGSTDVTNKSYLLEEDSRLFDASFFTINPAEAAGMDPQQRILLETVYEAFESAGMTLEQLRGSLTAVHVGTMTNDYAGIQLRDLETIAKYNATGTANSIVSNRISYVFDLKGPSETIDTACSSSLVALHHAARGLLNGDCETAVVAGVNLIYDAASYIAESKLHMLSPDSQSRMWDKSANGYARGEGAAALLLKPLSRALRDGDHIEGVIRATGVNSDGQSPGITMPFAPTQAALIRQTYRRAGLDPVKDRPQYFECHGTGTPAGDPVEARAISEAFEPSADNPIYVGSIKTIIGHLEGCAGLAGVMKVILALKNRTIPPNMLFNELNPAIAPFYGPLQIPKKAMPWPELPENTPIRASVNSFGFGGTNAHVIIESFESSTPSSDSEKCEEGALGPLLFSAGSGASLLHTVQAYVQYLDQNPSVDLRDLSWLLQTRRSTHRVRTHFSGTSSDAILESMIKFVNNNEKTPSTEVGHQPKLINPKEVPGILGVFTGQGAQWPQMGKELIGKSPIFRRTLEDCDATLQALPSSDIPKWSLVKELMANASSSRVAEAAISQPLCTAVQLGLVNMLKASGLNFDAVVGHSSGEIAATYASGIINLQAAIQIAYYRGFHAKLAKGEKGQQGGMLAAGLTLDKAKQLCLREEFVGRLQVAASNAPQTVTLSGDLDAIEEVKKYLDEENVFARQLKVDTAYHSHHMKPCAEPYLKSLLACDIEVRKPTPGQCIWNSSVRGDTGLLKGDLSSLKGPYWVANMVQTVLFSQAVESSIWHGGPWDLAIEVGPHPALKGPTEQTLKAVYGVVPLYTGVLKRGASDVEAFSTAIGVTWSQLGPSFVDFAGYRKTFYESEPPTPKVIKDLPGYSWDHDKVYWRESRISKRYRTGRDQTHELLGRRTPDDNEFELRWRNVLKLSEMPWLRGHEVLEEVLLPGAAYVSIAVEASKHIATSKGKSIELLEVEDVDIQRPVVVPDNKEGVETLFTARLLPGSSSDKVLKALFSYYICNDQSTGTMVHTCSGRLSVHLGEAKEDVLPQRDPVPQNLVNINTDRAYGMFKDIGLNYTGVFRSIKESSRTLQYSAATGIWPEGSLSDKYLVHPAMLDVAFQTLFIARAHPASRLITSALLPSHIERIQVSPSVPILHARENSDEIKADFDCWVVHQTASSLTGDLNIYDKVSGKTFLQVEGLTTKMVGEQDASGDRPVFTKTVWGSDGSLGLDEPERDPVGDAEGLSLAEAAERMALFYMKRVVKEISPEERTKFQWYHQRMFEAFEQHLVNVGSGSHPMLKSEWLSDDSSIMDGLDRIHPTSIDLKLLRACGENMPDVVREKTQLLEVMSKDDMLNRFYMDNCAARINNDIAKVVKQISFKFPRANILEIGAGTGGTTWSILKDINDAYDSYTFTDISSGFFPKAAEKFSDFAHKMIFKTLDVEKQPSEQGFAENSYDVIVAANVLHATRSLETTLRNARSLLRPGGYLILMEITNPESLRTTFIFGGFSGWWLSEEPHRKLGPVVTAMDWDTVLNDTGYSGADMVVHDLAEESKHLTSLIVSQAVDDDFLRLREPLSNLADMSAPTESILVIGGKKLLTSKMVNEINKLLPKSWKRHISSAGSIDDIDINELKPGTEVISLQELDDPLFSTPMTAERMSTIQNLMMSAKTLLWVTTAGKSHAPRASMFHGIARIVPSELQHLQIQVLGLEAGSTPAIATRHCVEAFLRLRGTSDTTREMLWAIEPEVEIMADGQVLIPRVVPDETLNQTYNASRRVVTKTVDATDLAVEAVAGPTKMMLQTAELQAGERKTRIQVKYALHLPAMDGKGIYVVYGQRQDDTSSFVLAVSKSNSSIVDVDSKHAVSVSDNCEPATLNVLATYLIARAIATLSKQAGSVLLSEPEESLAAIVATETAKQGTQAYFLSSKKVSPVEWIKVHANASKRAIQKAVPHDVQLLIDCSGIEASGNAVMASMPLHCVERQLDAHLLFDALESTESKPESLLEEAYQYATQLITQEQVQSECEVFPASDLPLTNMLSLVHKKYVTDWQQRDSLVVSVPPLDLEGIFKADKTYLMVGAAGGLGLSICEWMIRNGAKNLIITSRKPQVDQNMIEEASRVGATVKVMAMDVSSKESVAEVVQQAQEIMPPIAGVCNAAMVLSDKMFLDMDVDQLNGTLAAKVYGTEHLDAVFADAPLDFFIVLSSTATTIGNIGQANYHVANLFMTSLVAQRRARGLAGSVIHIGYVADVGYVTRQDRERQLEQHFRNVRLMALSETDVHHAFAEAVRGGRPGNTVGSPDIIMGLEPASVPLEPERQTLWLSNPCFGHLVPSTLQNDSSQTGGTGNGSSVRRQVEEAQTEDEAVDAVLDGFCAKLEAILQLREGSVKENVQRAVIDLGIDSLVAVEIRTWFLKELGAEVPVVKILGGDTVLQICTTAAKKVMANAMKKKEEDAVAEEGGREAASKKEPAPAASAPTPAPVAPSLLDVPARAFEPDSATISEVGDDSAFSNKGSSSSATGASSPKELSDSESVPDTSKDQSHVRPETVRDERMSPAQARIWFLTKHLDDPSAYNMVFHYRVKGPLKTVRLRHALQVATGHHESLRTLFYSRLEDGQPMQGVMPASAYELKHVPGADEADLKKELALLKAREWDLENGRTFSVSVLSRAADEHDVVFGYHHIIMDVVGWYFFVRDLDRAYRMQPFDKKISGSYVDYSVMQLSQKNTAAASDDLAFWQKEFSTVPDPIPLLPIAAVSARPTDSGRKVSHHEYLELDPAQNLAVKETCEKLRISPFHFHVAVLRALIGGYTNIDDMCIGVVDANRGDERFAQTVGCFVNMLPVRVEAPSDATFADIARSASRKALMAFAHSSAPLDMILDAVKAPRSSETTPLFQVAVNYRTGGVWDLPMGDCQMKLSLTDGKDAENPFDISLGIAETGKGCVIEMHCQKTLYSSDATRTLLNTYLRLVDTFCKNTHVKLKDCVIHDQAKVSEALQIGKGPTTDFGWPSTLSHRVLETCLKSPKNAAIQFKGELLSYEQLASRIHLVAAAIVRAGASKGSRVAVLCEPSADAIISMLATLHIGGVYIPMDVSLPTARHAAMMNGGQPTLLLSHAATKHRVEDLVNETGSTISVLQVDTISSVEEKETVSCAAEPHNNAVLLFTSGSTGTPKGIMLSQANFVNHLALKTDRLQLGQENVLQQSSMGFDMSLIQMFCALANGGCLVIAPSEMRRDPVELTNLVHNSQISLTIATPSEYLAWLRYGTASLKDHTIWRHACMGGEPVSRQLKTEFWRLDLANLQLTNCYGPTEITAAATFETIRLDDQDDDNDRAQHAVGKALPNYSVRILDTAGRPQPVDHIGEICIGGASVALGYLGLPEQTKAKFTVDPVSGERLYLTGDKGKLLSDGTLLCLGRLDGDTQIKHRGLRIELQEVESALIQTANGLFSSAVVSARGSILVAHATISQSQAEPSESDLAKILSRLKLPQYFIPATIGILPTMPTTANGKLDRKAIASLPLPQKVTGEEGPQEKMNIREGELRLLWERVLPDTATTTPLGPSSDFFLCGGNSMLLMKLQAAIKESIGIEISTRVLYQASTLREMALCVDEQREEQADALEQHFDWQAETSLPKWLLDQIEDLPKTTKQPPKPNGIDILMTGATSFIGGRLLRSLVRSPSVRKVHCVAVLADEQDQLYQDEKVKCYTGSLLSSTLGLNNGERDQLARNVDVVIHAGSSGHCLNTYGSLRTPNLVSLQFLASLALPRSIPLLLLSSNRVPLLSGNTALPPTSVAAFPPATDGREGYTATKWASEVFLEKLVGAVQKKAPRPWVASVHRPCVVVSEHAPNSDALNAILRYSASMKCVPHLESATGYLDFASVESIVDSMAESAIEMATGNVTDQPSIRFQHHSGGVKVPIGDFKVHMENVYGGNFEEVHLEEWMHRAAAAGLDPLITAYMEGIIEAGAPIVFPYLGETV</sequence>
<feature type="chain" id="PRO_0000448981" description="Hybrid PKS-NRPS synthetase iccA">
    <location>
        <begin position="1"/>
        <end position="4015"/>
    </location>
</feature>
<feature type="domain" description="Ketosynthase family 3 (KS3)" evidence="4">
    <location>
        <begin position="16"/>
        <end position="445"/>
    </location>
</feature>
<feature type="domain" description="PKS/mFAS DH" evidence="5">
    <location>
        <begin position="954"/>
        <end position="1261"/>
    </location>
</feature>
<feature type="domain" description="Carrier 1" evidence="3">
    <location>
        <begin position="2409"/>
        <end position="2488"/>
    </location>
</feature>
<feature type="domain" description="Carrier 2" evidence="3">
    <location>
        <begin position="3572"/>
        <end position="3651"/>
    </location>
</feature>
<feature type="region of interest" description="Disordered" evidence="6">
    <location>
        <begin position="1"/>
        <end position="20"/>
    </location>
</feature>
<feature type="region of interest" description="Malonyl-CoA:ACP transacylase (MAT) domain" evidence="1 2">
    <location>
        <begin position="560"/>
        <end position="885"/>
    </location>
</feature>
<feature type="region of interest" description="Dehydratase (DH) domain" evidence="1 2">
    <location>
        <begin position="954"/>
        <end position="1260"/>
    </location>
</feature>
<feature type="region of interest" description="N-terminal hotdog fold" evidence="5">
    <location>
        <begin position="954"/>
        <end position="1091"/>
    </location>
</feature>
<feature type="region of interest" description="C-terminal hotdog fold" evidence="5">
    <location>
        <begin position="1106"/>
        <end position="1261"/>
    </location>
</feature>
<feature type="region of interest" description="Methyltransferase (MT) domain" evidence="1 2">
    <location>
        <begin position="1400"/>
        <end position="1598"/>
    </location>
</feature>
<feature type="region of interest" description="Ketoreductase (KR) domain" evidence="1 2">
    <location>
        <begin position="2120"/>
        <end position="2261"/>
    </location>
</feature>
<feature type="region of interest" description="Disordered" evidence="6">
    <location>
        <begin position="2379"/>
        <end position="2405"/>
    </location>
</feature>
<feature type="region of interest" description="Disordered" evidence="6">
    <location>
        <begin position="2498"/>
        <end position="2529"/>
    </location>
</feature>
<feature type="region of interest" description="Disordered" evidence="6">
    <location>
        <begin position="2545"/>
        <end position="2597"/>
    </location>
</feature>
<feature type="region of interest" description="Condensation (C) domain" evidence="1 2">
    <location>
        <begin position="2598"/>
        <end position="3029"/>
    </location>
</feature>
<feature type="region of interest" description="Adenylation (A) (KR) domain" evidence="1 2">
    <location>
        <begin position="3063"/>
        <end position="3459"/>
    </location>
</feature>
<feature type="region of interest" description="Reductase (RED) domain" evidence="1 2">
    <location>
        <begin position="3063"/>
        <end position="3459"/>
    </location>
</feature>
<feature type="compositionally biased region" description="Polar residues" evidence="6">
    <location>
        <begin position="1"/>
        <end position="12"/>
    </location>
</feature>
<feature type="compositionally biased region" description="Basic and acidic residues" evidence="6">
    <location>
        <begin position="2498"/>
        <end position="2515"/>
    </location>
</feature>
<feature type="compositionally biased region" description="Low complexity" evidence="6">
    <location>
        <begin position="2553"/>
        <end position="2569"/>
    </location>
</feature>
<feature type="compositionally biased region" description="Basic and acidic residues" evidence="6">
    <location>
        <begin position="2582"/>
        <end position="2597"/>
    </location>
</feature>
<feature type="active site" description="For beta-ketoacyl synthase activity" evidence="4">
    <location>
        <position position="190"/>
    </location>
</feature>
<feature type="active site" description="For beta-ketoacyl synthase activity" evidence="4">
    <location>
        <position position="327"/>
    </location>
</feature>
<feature type="active site" description="For beta-ketoacyl synthase activity" evidence="4">
    <location>
        <position position="365"/>
    </location>
</feature>
<feature type="active site" description="Proton acceptor; for dehydratase activity" evidence="5">
    <location>
        <position position="986"/>
    </location>
</feature>
<feature type="active site" description="Proton donor; for dehydratase activity" evidence="5">
    <location>
        <position position="1165"/>
    </location>
</feature>
<feature type="modified residue" description="O-(pantetheine 4'-phosphoryl)serine" evidence="3">
    <location>
        <position position="2448"/>
    </location>
</feature>
<feature type="modified residue" description="O-(pantetheine 4'-phosphoryl)serine" evidence="3">
    <location>
        <position position="3611"/>
    </location>
</feature>
<reference key="1">
    <citation type="journal article" date="2019" name="J. Am. Chem. Soc.">
        <title>Enzyme-catalyzed inverse-electron demand Diels-Alder reaction in the biosynthesis of antifungal ilicicolin H.</title>
        <authorList>
            <person name="Zhang Z."/>
            <person name="Jamieson C.S."/>
            <person name="Zhao Y.L."/>
            <person name="Li D."/>
            <person name="Ohashi M."/>
            <person name="Houk K.N."/>
            <person name="Tang Y."/>
        </authorList>
    </citation>
    <scope>NUCLEOTIDE SEQUENCE [GENOMIC DNA]</scope>
    <scope>FUNCTION</scope>
    <scope>CATALYTIC ACTIVITY</scope>
    <scope>PATHWAY</scope>
    <source>
        <strain>HXQ-H-1</strain>
    </source>
</reference>
<protein>
    <recommendedName>
        <fullName evidence="8">Hybrid PKS-NRPS synthetase iccA</fullName>
        <shortName evidence="8">PKS-NRPS iccA</shortName>
        <ecNumber evidence="7">2.3.1.-</ecNumber>
        <ecNumber evidence="7">6.3.2.-</ecNumber>
    </recommendedName>
    <alternativeName>
        <fullName evidence="8">Ilicicolin H biosynthesis cluster protein A</fullName>
    </alternativeName>
</protein>
<organism>
    <name type="scientific">Talaromyces variabilis</name>
    <name type="common">Penicillium variabile</name>
    <dbReference type="NCBI Taxonomy" id="28576"/>
    <lineage>
        <taxon>Eukaryota</taxon>
        <taxon>Fungi</taxon>
        <taxon>Dikarya</taxon>
        <taxon>Ascomycota</taxon>
        <taxon>Pezizomycotina</taxon>
        <taxon>Eurotiomycetes</taxon>
        <taxon>Eurotiomycetidae</taxon>
        <taxon>Eurotiales</taxon>
        <taxon>Trichocomaceae</taxon>
        <taxon>Talaromyces</taxon>
    </lineage>
</organism>
<comment type="function">
    <text evidence="7 10">Hybrid PKS-NRPS synthetase; part of the gene cluster that mediates the biosynthesis of ilicicolin H, a 4-hydroxy-2-pyridonealkaloid that has potent and broad antifungal activities by inhibiting the mitochondrial respiration chain (PubMed:30905148). IccA assembles the backbone of ilicicolin H (PubMed:30905148). The PKS portion and trans-acting enoyl reductase iccB work together to construct an octaketide, and two methyl groups are introduced by the MT domain during the chain assembly (PubMed:30905148). The nascent chain is then condensed with tyrosine, catalyzed by the C domain, and the resulting PKS-NRPS hybrid is offloaded by the RED domain to form an advanced tetramic acid intermediate (PubMed:30905148). The biosynthesis of ilicicolin H starts with formation of the tetramic acid by the hybrid PKS-NRPS synthetase iccA with the partnering trans-enoyl reductase iccB since iccA lacks a designated enoylreductase (ER) domain. The cytochrome P450 monooxygenase iccC then catalyzes the ring expansion of the tetramate to the acyclic 2-pyridone. The pericyclase iccD further converts the acyclic 2-pyridone into 8-epi-ilicicolin H. Finally, the epimerase iccE converts 8-epi-ilicicolin H into ilicicolin H via epimerization. IccA to iccE are sufficient for ilicicolin H biosynthesis and the roles of the remaining enzymes, iccF, iccG and iccH within the pathway have still to be determined (Probable) (PubMed:30905148).</text>
</comment>
<comment type="catalytic activity">
    <reaction evidence="7">
        <text>L-tyrosine + holo-[ACP] + 7 malonyl-CoA + acetyl-CoA + 8 AH2 + 2 S-adenosyl-L-methionine + ATP + 4 H(+) = N-[(4E,6E,10S,12Z,14E)-6,10-dimethyl-3-oxohexadeca-4,6,12,14-tetraenoyl]-L-tyrosyl-[ACP] + 8 A + AMP + 2 S-adenosyl-L-homocysteine + 7 CO2 + diphosphate + 8 CoA + 6 H2O</text>
        <dbReference type="Rhea" id="RHEA:64544"/>
        <dbReference type="Rhea" id="RHEA-COMP:9685"/>
        <dbReference type="Rhea" id="RHEA-COMP:16623"/>
        <dbReference type="ChEBI" id="CHEBI:13193"/>
        <dbReference type="ChEBI" id="CHEBI:15377"/>
        <dbReference type="ChEBI" id="CHEBI:15378"/>
        <dbReference type="ChEBI" id="CHEBI:16526"/>
        <dbReference type="ChEBI" id="CHEBI:17499"/>
        <dbReference type="ChEBI" id="CHEBI:30616"/>
        <dbReference type="ChEBI" id="CHEBI:33019"/>
        <dbReference type="ChEBI" id="CHEBI:57287"/>
        <dbReference type="ChEBI" id="CHEBI:57288"/>
        <dbReference type="ChEBI" id="CHEBI:57384"/>
        <dbReference type="ChEBI" id="CHEBI:57856"/>
        <dbReference type="ChEBI" id="CHEBI:58315"/>
        <dbReference type="ChEBI" id="CHEBI:59789"/>
        <dbReference type="ChEBI" id="CHEBI:64479"/>
        <dbReference type="ChEBI" id="CHEBI:155893"/>
        <dbReference type="ChEBI" id="CHEBI:456215"/>
    </reaction>
    <physiologicalReaction direction="left-to-right" evidence="7">
        <dbReference type="Rhea" id="RHEA:64545"/>
    </physiologicalReaction>
</comment>
<comment type="pathway">
    <text evidence="7">Mycotoxin biosynthesis.</text>
</comment>
<comment type="domain">
    <text evidence="1">IccA has the following domain architecture: KS-MAT-DH-MT-KR-ACP-C-A-T-R. The PKS module (domains KS to ACP) is responsible for the biosynthesis of the polyketide chain and catalyzes three Claisen condensations, as well as beta-keto processing and methylation. The downstream NRPS module contains the condensation (C), adenylation (A), and thiolation (T) domains and catalyzes the formation of the L-tyrosinyl-thioester and the amide linkage between L-tyrosinyl-thioester and the tetraketide. The bimodular assembly line is terminated with a putative reductase (R) domain that facilitates formation and release of the tetramic acid product.</text>
</comment>
<comment type="similarity">
    <text evidence="9">In the C-terminal section; belongs to the NRP synthetase family.</text>
</comment>
<gene>
    <name evidence="8" type="primary">iccA</name>
</gene>
<keyword id="KW-0436">Ligase</keyword>
<keyword id="KW-0489">Methyltransferase</keyword>
<keyword id="KW-0511">Multifunctional enzyme</keyword>
<keyword id="KW-0560">Oxidoreductase</keyword>
<keyword id="KW-0596">Phosphopantetheine</keyword>
<keyword id="KW-0597">Phosphoprotein</keyword>
<keyword id="KW-0677">Repeat</keyword>
<keyword id="KW-0808">Transferase</keyword>
<name>ICCA_TALVA</name>